<name>CHMP7_XENLA</name>
<gene>
    <name type="primary">chmp7</name>
</gene>
<proteinExistence type="evidence at transcript level"/>
<organism>
    <name type="scientific">Xenopus laevis</name>
    <name type="common">African clawed frog</name>
    <dbReference type="NCBI Taxonomy" id="8355"/>
    <lineage>
        <taxon>Eukaryota</taxon>
        <taxon>Metazoa</taxon>
        <taxon>Chordata</taxon>
        <taxon>Craniata</taxon>
        <taxon>Vertebrata</taxon>
        <taxon>Euteleostomi</taxon>
        <taxon>Amphibia</taxon>
        <taxon>Batrachia</taxon>
        <taxon>Anura</taxon>
        <taxon>Pipoidea</taxon>
        <taxon>Pipidae</taxon>
        <taxon>Xenopodinae</taxon>
        <taxon>Xenopus</taxon>
        <taxon>Xenopus</taxon>
    </lineage>
</organism>
<comment type="function">
    <text evidence="1">ESCRT-III-like protein required to recruit the ESCRT-III complex to the nuclear envelope during late anaphase. Together with SPAST, the ESCRT-III complex promotes nuclear envelope sealing and mitotic spindle disassembly during late anaphase. Plays a role in the endosomal sorting pathway.</text>
</comment>
<comment type="subcellular location">
    <subcellularLocation>
        <location evidence="1">Cytoplasm</location>
    </subcellularLocation>
    <subcellularLocation>
        <location evidence="1">Nucleus envelope</location>
    </subcellularLocation>
    <text evidence="1">Diffused localization, with some punctate distribution, especially in the perinuclear area. Localizes to the nucleus envelope during late anaphase.</text>
</comment>
<comment type="similarity">
    <text evidence="4">Belongs to the SNF7 family.</text>
</comment>
<dbReference type="EMBL" id="BC055997">
    <property type="protein sequence ID" value="AAH55997.1"/>
    <property type="molecule type" value="mRNA"/>
</dbReference>
<dbReference type="SMR" id="Q7T0X5"/>
<dbReference type="IntAct" id="Q7T0X5">
    <property type="interactions" value="1"/>
</dbReference>
<dbReference type="AGR" id="Xenbase:XB-GENE-5867909"/>
<dbReference type="Xenbase" id="XB-GENE-5867909">
    <property type="gene designation" value="chmp7.L"/>
</dbReference>
<dbReference type="Proteomes" id="UP000186698">
    <property type="component" value="Unplaced"/>
</dbReference>
<dbReference type="GO" id="GO:0009898">
    <property type="term" value="C:cytoplasmic side of plasma membrane"/>
    <property type="evidence" value="ECO:0000318"/>
    <property type="project" value="GO_Central"/>
</dbReference>
<dbReference type="GO" id="GO:0000815">
    <property type="term" value="C:ESCRT III complex"/>
    <property type="evidence" value="ECO:0000250"/>
    <property type="project" value="UniProtKB"/>
</dbReference>
<dbReference type="GO" id="GO:0005771">
    <property type="term" value="C:multivesicular body"/>
    <property type="evidence" value="ECO:0000318"/>
    <property type="project" value="GO_Central"/>
</dbReference>
<dbReference type="GO" id="GO:0005635">
    <property type="term" value="C:nuclear envelope"/>
    <property type="evidence" value="ECO:0000250"/>
    <property type="project" value="UniProtKB"/>
</dbReference>
<dbReference type="GO" id="GO:0010458">
    <property type="term" value="P:exit from mitosis"/>
    <property type="evidence" value="ECO:0000250"/>
    <property type="project" value="UniProtKB"/>
</dbReference>
<dbReference type="GO" id="GO:0045324">
    <property type="term" value="P:late endosome to vacuole transport"/>
    <property type="evidence" value="ECO:0000250"/>
    <property type="project" value="UniProtKB"/>
</dbReference>
<dbReference type="GO" id="GO:0032511">
    <property type="term" value="P:late endosome to vacuole transport via multivesicular body sorting pathway"/>
    <property type="evidence" value="ECO:0000318"/>
    <property type="project" value="GO_Central"/>
</dbReference>
<dbReference type="GO" id="GO:0031468">
    <property type="term" value="P:nuclear membrane reassembly"/>
    <property type="evidence" value="ECO:0000250"/>
    <property type="project" value="UniProtKB"/>
</dbReference>
<dbReference type="GO" id="GO:0015031">
    <property type="term" value="P:protein transport"/>
    <property type="evidence" value="ECO:0007669"/>
    <property type="project" value="UniProtKB-KW"/>
</dbReference>
<dbReference type="GO" id="GO:0006900">
    <property type="term" value="P:vesicle budding from membrane"/>
    <property type="evidence" value="ECO:0000318"/>
    <property type="project" value="GO_Central"/>
</dbReference>
<dbReference type="Gene3D" id="6.10.140.1230">
    <property type="match status" value="1"/>
</dbReference>
<dbReference type="InterPro" id="IPR005024">
    <property type="entry name" value="Snf7_fam"/>
</dbReference>
<dbReference type="PANTHER" id="PTHR22761">
    <property type="entry name" value="CHARGED MULTIVESICULAR BODY PROTEIN"/>
    <property type="match status" value="1"/>
</dbReference>
<dbReference type="PANTHER" id="PTHR22761:SF21">
    <property type="entry name" value="CHARGED MULTIVESICULAR BODY PROTEIN 7"/>
    <property type="match status" value="1"/>
</dbReference>
<dbReference type="Pfam" id="PF03357">
    <property type="entry name" value="Snf7"/>
    <property type="match status" value="1"/>
</dbReference>
<dbReference type="Pfam" id="PF25239">
    <property type="entry name" value="WHD_CHMP7"/>
    <property type="match status" value="1"/>
</dbReference>
<feature type="chain" id="PRO_0000211521" description="Charged multivesicular body protein 7">
    <location>
        <begin position="1"/>
        <end position="422"/>
    </location>
</feature>
<feature type="region of interest" description="Disordered" evidence="3">
    <location>
        <begin position="394"/>
        <end position="422"/>
    </location>
</feature>
<feature type="coiled-coil region" evidence="2">
    <location>
        <begin position="234"/>
        <end position="304"/>
    </location>
</feature>
<keyword id="KW-0175">Coiled coil</keyword>
<keyword id="KW-0963">Cytoplasm</keyword>
<keyword id="KW-0539">Nucleus</keyword>
<keyword id="KW-0653">Protein transport</keyword>
<keyword id="KW-1185">Reference proteome</keyword>
<keyword id="KW-0813">Transport</keyword>
<sequence length="422" mass="47710">MAPLSCNPPEWEDDERMSFLFSAFKRTRDVNTCDWDGKMKFWIPLILTHARAQGLLSITLSQLENDFRRKGCAPMGLRTVIQEMIRQGTLRKETDFVSGVSSGWLSWGMRQLVIRPLRWTIGTMLGSQVGPDEPLVIPEVIKERAALVLQRYQSSTFRSFPLLCEEEVHTLCAEICPNPSALNLVLLQLQGDKKICVLERAGQKLVKFVRVSVGQVEPISESDLGIYQLQQGEKLLSERLQSAGEESNRLTEEARTYNRAGNKNQALRCLRKRKLVERRITELQNKQDNIQGILERISAAETDRKVVSAYQMGVSALKQALKDVTLEKAESIVDQIQEYCDLQDDLSQTLSSVTDADVDSDDLERELNEILQNEEMIIDLPDVPSGPVIISPKRPTEWKMDQAAHSPADGSFLRSVPEPMLQ</sequence>
<reference key="1">
    <citation type="submission" date="2003-08" db="EMBL/GenBank/DDBJ databases">
        <authorList>
            <consortium name="NIH - Xenopus Gene Collection (XGC) project"/>
        </authorList>
    </citation>
    <scope>NUCLEOTIDE SEQUENCE [LARGE SCALE MRNA]</scope>
    <source>
        <tissue>Embryo</tissue>
    </source>
</reference>
<accession>Q7T0X5</accession>
<evidence type="ECO:0000250" key="1">
    <source>
        <dbReference type="UniProtKB" id="Q8WUX9"/>
    </source>
</evidence>
<evidence type="ECO:0000255" key="2"/>
<evidence type="ECO:0000256" key="3">
    <source>
        <dbReference type="SAM" id="MobiDB-lite"/>
    </source>
</evidence>
<evidence type="ECO:0000305" key="4"/>
<protein>
    <recommendedName>
        <fullName>Charged multivesicular body protein 7</fullName>
    </recommendedName>
    <alternativeName>
        <fullName>Chromatin-modifying protein 7</fullName>
    </alternativeName>
</protein>